<comment type="function">
    <text evidence="1">Catalyzes the oxidation of 5,10-methylenetetrahydrofolate to 5,10-methenyltetrahydrofolate and then the hydrolysis of 5,10-methenyltetrahydrofolate to 10-formyltetrahydrofolate.</text>
</comment>
<comment type="catalytic activity">
    <reaction evidence="1">
        <text>(6R)-5,10-methylene-5,6,7,8-tetrahydrofolate + NADP(+) = (6R)-5,10-methenyltetrahydrofolate + NADPH</text>
        <dbReference type="Rhea" id="RHEA:22812"/>
        <dbReference type="ChEBI" id="CHEBI:15636"/>
        <dbReference type="ChEBI" id="CHEBI:57455"/>
        <dbReference type="ChEBI" id="CHEBI:57783"/>
        <dbReference type="ChEBI" id="CHEBI:58349"/>
        <dbReference type="EC" id="1.5.1.5"/>
    </reaction>
</comment>
<comment type="catalytic activity">
    <reaction evidence="1">
        <text>(6R)-5,10-methenyltetrahydrofolate + H2O = (6R)-10-formyltetrahydrofolate + H(+)</text>
        <dbReference type="Rhea" id="RHEA:23700"/>
        <dbReference type="ChEBI" id="CHEBI:15377"/>
        <dbReference type="ChEBI" id="CHEBI:15378"/>
        <dbReference type="ChEBI" id="CHEBI:57455"/>
        <dbReference type="ChEBI" id="CHEBI:195366"/>
        <dbReference type="EC" id="3.5.4.9"/>
    </reaction>
</comment>
<comment type="pathway">
    <text evidence="1">One-carbon metabolism; tetrahydrofolate interconversion.</text>
</comment>
<comment type="subunit">
    <text evidence="1">Homodimer.</text>
</comment>
<comment type="similarity">
    <text evidence="1">Belongs to the tetrahydrofolate dehydrogenase/cyclohydrolase family.</text>
</comment>
<accession>Q89A92</accession>
<feature type="chain" id="PRO_0000199302" description="Bifunctional protein FolD">
    <location>
        <begin position="1"/>
        <end position="287"/>
    </location>
</feature>
<feature type="binding site" evidence="1">
    <location>
        <begin position="166"/>
        <end position="168"/>
    </location>
    <ligand>
        <name>NADP(+)</name>
        <dbReference type="ChEBI" id="CHEBI:58349"/>
    </ligand>
</feature>
<feature type="binding site" evidence="1">
    <location>
        <position position="232"/>
    </location>
    <ligand>
        <name>NADP(+)</name>
        <dbReference type="ChEBI" id="CHEBI:58349"/>
    </ligand>
</feature>
<sequence>MLKKVLNGTRIAKKLEFKILKQVNYKLSLGQRPPGLAVILIGSNSASTIYVKKKRFMCEQVGFISKFWKFSKNIQESKILNLIYKLNYDTTIDGILVQLPIPPNINNQKLFSSIIPTKDVDGFHPYNIGSLCQKSPYLRPCTPFGIITMLKHYKIKIRGLHAVVIGASNIVGRPMSMELLLAGCTTTITHRFTKNLKHYVKQADLIVIAIGHAHFLKGTWIKKGAIVIDVGINRLKNGEIVGDVDFKTAYKKSSYITPVPGGVGPMTVITLLNNTLKAYEQISKDCK</sequence>
<organism>
    <name type="scientific">Buchnera aphidicola subsp. Baizongia pistaciae (strain Bp)</name>
    <dbReference type="NCBI Taxonomy" id="224915"/>
    <lineage>
        <taxon>Bacteria</taxon>
        <taxon>Pseudomonadati</taxon>
        <taxon>Pseudomonadota</taxon>
        <taxon>Gammaproteobacteria</taxon>
        <taxon>Enterobacterales</taxon>
        <taxon>Erwiniaceae</taxon>
        <taxon>Buchnera</taxon>
    </lineage>
</organism>
<keyword id="KW-0028">Amino-acid biosynthesis</keyword>
<keyword id="KW-0368">Histidine biosynthesis</keyword>
<keyword id="KW-0378">Hydrolase</keyword>
<keyword id="KW-0486">Methionine biosynthesis</keyword>
<keyword id="KW-0511">Multifunctional enzyme</keyword>
<keyword id="KW-0521">NADP</keyword>
<keyword id="KW-0554">One-carbon metabolism</keyword>
<keyword id="KW-0560">Oxidoreductase</keyword>
<keyword id="KW-0658">Purine biosynthesis</keyword>
<keyword id="KW-1185">Reference proteome</keyword>
<name>FOLD_BUCBP</name>
<evidence type="ECO:0000255" key="1">
    <source>
        <dbReference type="HAMAP-Rule" id="MF_01576"/>
    </source>
</evidence>
<gene>
    <name evidence="1" type="primary">folD</name>
    <name type="ordered locus">bbp_430</name>
</gene>
<reference key="1">
    <citation type="journal article" date="2003" name="Proc. Natl. Acad. Sci. U.S.A.">
        <title>Reductive genome evolution in Buchnera aphidicola.</title>
        <authorList>
            <person name="van Ham R.C.H.J."/>
            <person name="Kamerbeek J."/>
            <person name="Palacios C."/>
            <person name="Rausell C."/>
            <person name="Abascal F."/>
            <person name="Bastolla U."/>
            <person name="Fernandez J.M."/>
            <person name="Jimenez L."/>
            <person name="Postigo M."/>
            <person name="Silva F.J."/>
            <person name="Tamames J."/>
            <person name="Viguera E."/>
            <person name="Latorre A."/>
            <person name="Valencia A."/>
            <person name="Moran F."/>
            <person name="Moya A."/>
        </authorList>
    </citation>
    <scope>NUCLEOTIDE SEQUENCE [LARGE SCALE GENOMIC DNA]</scope>
    <source>
        <strain>Bp</strain>
    </source>
</reference>
<proteinExistence type="inferred from homology"/>
<protein>
    <recommendedName>
        <fullName evidence="1">Bifunctional protein FolD</fullName>
    </recommendedName>
    <domain>
        <recommendedName>
            <fullName evidence="1">Methylenetetrahydrofolate dehydrogenase</fullName>
            <ecNumber evidence="1">1.5.1.5</ecNumber>
        </recommendedName>
    </domain>
    <domain>
        <recommendedName>
            <fullName evidence="1">Methenyltetrahydrofolate cyclohydrolase</fullName>
            <ecNumber evidence="1">3.5.4.9</ecNumber>
        </recommendedName>
    </domain>
</protein>
<dbReference type="EC" id="1.5.1.5" evidence="1"/>
<dbReference type="EC" id="3.5.4.9" evidence="1"/>
<dbReference type="EMBL" id="AE016826">
    <property type="protein sequence ID" value="AAO27139.1"/>
    <property type="molecule type" value="Genomic_DNA"/>
</dbReference>
<dbReference type="RefSeq" id="WP_011091540.1">
    <property type="nucleotide sequence ID" value="NC_004545.1"/>
</dbReference>
<dbReference type="SMR" id="Q89A92"/>
<dbReference type="STRING" id="224915.bbp_430"/>
<dbReference type="KEGG" id="bab:bbp_430"/>
<dbReference type="eggNOG" id="COG0190">
    <property type="taxonomic scope" value="Bacteria"/>
</dbReference>
<dbReference type="HOGENOM" id="CLU_034045_2_1_6"/>
<dbReference type="OrthoDB" id="9803580at2"/>
<dbReference type="UniPathway" id="UPA00193"/>
<dbReference type="Proteomes" id="UP000000601">
    <property type="component" value="Chromosome"/>
</dbReference>
<dbReference type="GO" id="GO:0005829">
    <property type="term" value="C:cytosol"/>
    <property type="evidence" value="ECO:0007669"/>
    <property type="project" value="TreeGrafter"/>
</dbReference>
<dbReference type="GO" id="GO:0004477">
    <property type="term" value="F:methenyltetrahydrofolate cyclohydrolase activity"/>
    <property type="evidence" value="ECO:0007669"/>
    <property type="project" value="UniProtKB-UniRule"/>
</dbReference>
<dbReference type="GO" id="GO:0004488">
    <property type="term" value="F:methylenetetrahydrofolate dehydrogenase (NADP+) activity"/>
    <property type="evidence" value="ECO:0007669"/>
    <property type="project" value="UniProtKB-UniRule"/>
</dbReference>
<dbReference type="GO" id="GO:0000105">
    <property type="term" value="P:L-histidine biosynthetic process"/>
    <property type="evidence" value="ECO:0007669"/>
    <property type="project" value="UniProtKB-KW"/>
</dbReference>
<dbReference type="GO" id="GO:0009086">
    <property type="term" value="P:methionine biosynthetic process"/>
    <property type="evidence" value="ECO:0007669"/>
    <property type="project" value="UniProtKB-KW"/>
</dbReference>
<dbReference type="GO" id="GO:0006164">
    <property type="term" value="P:purine nucleotide biosynthetic process"/>
    <property type="evidence" value="ECO:0007669"/>
    <property type="project" value="UniProtKB-KW"/>
</dbReference>
<dbReference type="GO" id="GO:0035999">
    <property type="term" value="P:tetrahydrofolate interconversion"/>
    <property type="evidence" value="ECO:0007669"/>
    <property type="project" value="UniProtKB-UniRule"/>
</dbReference>
<dbReference type="CDD" id="cd01080">
    <property type="entry name" value="NAD_bind_m-THF_DH_Cyclohyd"/>
    <property type="match status" value="1"/>
</dbReference>
<dbReference type="FunFam" id="3.40.50.720:FF:000006">
    <property type="entry name" value="Bifunctional protein FolD"/>
    <property type="match status" value="1"/>
</dbReference>
<dbReference type="FunFam" id="3.40.50.10860:FF:000005">
    <property type="entry name" value="C-1-tetrahydrofolate synthase, cytoplasmic, putative"/>
    <property type="match status" value="1"/>
</dbReference>
<dbReference type="Gene3D" id="3.40.50.10860">
    <property type="entry name" value="Leucine Dehydrogenase, chain A, domain 1"/>
    <property type="match status" value="1"/>
</dbReference>
<dbReference type="Gene3D" id="3.40.50.720">
    <property type="entry name" value="NAD(P)-binding Rossmann-like Domain"/>
    <property type="match status" value="1"/>
</dbReference>
<dbReference type="HAMAP" id="MF_01576">
    <property type="entry name" value="THF_DHG_CYH"/>
    <property type="match status" value="1"/>
</dbReference>
<dbReference type="InterPro" id="IPR046346">
    <property type="entry name" value="Aminoacid_DH-like_N_sf"/>
</dbReference>
<dbReference type="InterPro" id="IPR036291">
    <property type="entry name" value="NAD(P)-bd_dom_sf"/>
</dbReference>
<dbReference type="InterPro" id="IPR000672">
    <property type="entry name" value="THF_DH/CycHdrlase"/>
</dbReference>
<dbReference type="InterPro" id="IPR020630">
    <property type="entry name" value="THF_DH/CycHdrlase_cat_dom"/>
</dbReference>
<dbReference type="InterPro" id="IPR020867">
    <property type="entry name" value="THF_DH/CycHdrlase_CS"/>
</dbReference>
<dbReference type="InterPro" id="IPR020631">
    <property type="entry name" value="THF_DH/CycHdrlase_NAD-bd_dom"/>
</dbReference>
<dbReference type="NCBIfam" id="NF008058">
    <property type="entry name" value="PRK10792.1"/>
    <property type="match status" value="1"/>
</dbReference>
<dbReference type="PANTHER" id="PTHR48099:SF5">
    <property type="entry name" value="C-1-TETRAHYDROFOLATE SYNTHASE, CYTOPLASMIC"/>
    <property type="match status" value="1"/>
</dbReference>
<dbReference type="PANTHER" id="PTHR48099">
    <property type="entry name" value="C-1-TETRAHYDROFOLATE SYNTHASE, CYTOPLASMIC-RELATED"/>
    <property type="match status" value="1"/>
</dbReference>
<dbReference type="Pfam" id="PF00763">
    <property type="entry name" value="THF_DHG_CYH"/>
    <property type="match status" value="1"/>
</dbReference>
<dbReference type="Pfam" id="PF02882">
    <property type="entry name" value="THF_DHG_CYH_C"/>
    <property type="match status" value="1"/>
</dbReference>
<dbReference type="PRINTS" id="PR00085">
    <property type="entry name" value="THFDHDRGNASE"/>
</dbReference>
<dbReference type="SUPFAM" id="SSF53223">
    <property type="entry name" value="Aminoacid dehydrogenase-like, N-terminal domain"/>
    <property type="match status" value="1"/>
</dbReference>
<dbReference type="SUPFAM" id="SSF51735">
    <property type="entry name" value="NAD(P)-binding Rossmann-fold domains"/>
    <property type="match status" value="1"/>
</dbReference>
<dbReference type="PROSITE" id="PS00766">
    <property type="entry name" value="THF_DHG_CYH_1"/>
    <property type="match status" value="1"/>
</dbReference>
<dbReference type="PROSITE" id="PS00767">
    <property type="entry name" value="THF_DHG_CYH_2"/>
    <property type="match status" value="1"/>
</dbReference>